<organism>
    <name type="scientific">Leptospira interrogans serogroup Icterohaemorrhagiae serovar copenhageni (strain Fiocruz L1-130)</name>
    <dbReference type="NCBI Taxonomy" id="267671"/>
    <lineage>
        <taxon>Bacteria</taxon>
        <taxon>Pseudomonadati</taxon>
        <taxon>Spirochaetota</taxon>
        <taxon>Spirochaetia</taxon>
        <taxon>Leptospirales</taxon>
        <taxon>Leptospiraceae</taxon>
        <taxon>Leptospira</taxon>
    </lineage>
</organism>
<proteinExistence type="inferred from homology"/>
<reference key="1">
    <citation type="journal article" date="2004" name="J. Bacteriol.">
        <title>Comparative genomics of two Leptospira interrogans serovars reveals novel insights into physiology and pathogenesis.</title>
        <authorList>
            <person name="Nascimento A.L.T.O."/>
            <person name="Ko A.I."/>
            <person name="Martins E.A.L."/>
            <person name="Monteiro-Vitorello C.B."/>
            <person name="Ho P.L."/>
            <person name="Haake D.A."/>
            <person name="Verjovski-Almeida S."/>
            <person name="Hartskeerl R.A."/>
            <person name="Marques M.V."/>
            <person name="Oliveira M.C."/>
            <person name="Menck C.F.M."/>
            <person name="Leite L.C.C."/>
            <person name="Carrer H."/>
            <person name="Coutinho L.L."/>
            <person name="Degrave W.M."/>
            <person name="Dellagostin O.A."/>
            <person name="El-Dorry H."/>
            <person name="Ferro E.S."/>
            <person name="Ferro M.I.T."/>
            <person name="Furlan L.R."/>
            <person name="Gamberini M."/>
            <person name="Giglioti E.A."/>
            <person name="Goes-Neto A."/>
            <person name="Goldman G.H."/>
            <person name="Goldman M.H.S."/>
            <person name="Harakava R."/>
            <person name="Jeronimo S.M.B."/>
            <person name="Junqueira-de-Azevedo I.L.M."/>
            <person name="Kimura E.T."/>
            <person name="Kuramae E.E."/>
            <person name="Lemos E.G.M."/>
            <person name="Lemos M.V.F."/>
            <person name="Marino C.L."/>
            <person name="Nunes L.R."/>
            <person name="de Oliveira R.C."/>
            <person name="Pereira G.G."/>
            <person name="Reis M.S."/>
            <person name="Schriefer A."/>
            <person name="Siqueira W.J."/>
            <person name="Sommer P."/>
            <person name="Tsai S.M."/>
            <person name="Simpson A.J.G."/>
            <person name="Ferro J.A."/>
            <person name="Camargo L.E.A."/>
            <person name="Kitajima J.P."/>
            <person name="Setubal J.C."/>
            <person name="Van Sluys M.A."/>
        </authorList>
    </citation>
    <scope>NUCLEOTIDE SEQUENCE [LARGE SCALE GENOMIC DNA]</scope>
    <source>
        <strain>Fiocruz L1-130</strain>
    </source>
</reference>
<keyword id="KW-0067">ATP-binding</keyword>
<keyword id="KW-0963">Cytoplasm</keyword>
<keyword id="KW-0315">Glutamine amidotransferase</keyword>
<keyword id="KW-0378">Hydrolase</keyword>
<keyword id="KW-0436">Ligase</keyword>
<keyword id="KW-0547">Nucleotide-binding</keyword>
<keyword id="KW-0658">Purine biosynthesis</keyword>
<evidence type="ECO:0000255" key="1">
    <source>
        <dbReference type="HAMAP-Rule" id="MF_00421"/>
    </source>
</evidence>
<feature type="chain" id="PRO_0000100564" description="Phosphoribosylformylglycinamidine synthase subunit PurQ">
    <location>
        <begin position="1"/>
        <end position="219"/>
    </location>
</feature>
<feature type="domain" description="Glutamine amidotransferase type-1" evidence="1">
    <location>
        <begin position="2"/>
        <end position="219"/>
    </location>
</feature>
<feature type="active site" description="Nucleophile" evidence="1">
    <location>
        <position position="86"/>
    </location>
</feature>
<feature type="active site" evidence="1">
    <location>
        <position position="195"/>
    </location>
</feature>
<feature type="active site" evidence="1">
    <location>
        <position position="197"/>
    </location>
</feature>
<gene>
    <name evidence="1" type="primary">purQ</name>
    <name type="ordered locus">LIC_10681</name>
</gene>
<comment type="function">
    <text evidence="1">Part of the phosphoribosylformylglycinamidine synthase complex involved in the purines biosynthetic pathway. Catalyzes the ATP-dependent conversion of formylglycinamide ribonucleotide (FGAR) and glutamine to yield formylglycinamidine ribonucleotide (FGAM) and glutamate. The FGAM synthase complex is composed of three subunits. PurQ produces an ammonia molecule by converting glutamine to glutamate. PurL transfers the ammonia molecule to FGAR to form FGAM in an ATP-dependent manner. PurS interacts with PurQ and PurL and is thought to assist in the transfer of the ammonia molecule from PurQ to PurL.</text>
</comment>
<comment type="catalytic activity">
    <reaction evidence="1">
        <text>N(2)-formyl-N(1)-(5-phospho-beta-D-ribosyl)glycinamide + L-glutamine + ATP + H2O = 2-formamido-N(1)-(5-O-phospho-beta-D-ribosyl)acetamidine + L-glutamate + ADP + phosphate + H(+)</text>
        <dbReference type="Rhea" id="RHEA:17129"/>
        <dbReference type="ChEBI" id="CHEBI:15377"/>
        <dbReference type="ChEBI" id="CHEBI:15378"/>
        <dbReference type="ChEBI" id="CHEBI:29985"/>
        <dbReference type="ChEBI" id="CHEBI:30616"/>
        <dbReference type="ChEBI" id="CHEBI:43474"/>
        <dbReference type="ChEBI" id="CHEBI:58359"/>
        <dbReference type="ChEBI" id="CHEBI:147286"/>
        <dbReference type="ChEBI" id="CHEBI:147287"/>
        <dbReference type="ChEBI" id="CHEBI:456216"/>
        <dbReference type="EC" id="6.3.5.3"/>
    </reaction>
</comment>
<comment type="catalytic activity">
    <reaction evidence="1">
        <text>L-glutamine + H2O = L-glutamate + NH4(+)</text>
        <dbReference type="Rhea" id="RHEA:15889"/>
        <dbReference type="ChEBI" id="CHEBI:15377"/>
        <dbReference type="ChEBI" id="CHEBI:28938"/>
        <dbReference type="ChEBI" id="CHEBI:29985"/>
        <dbReference type="ChEBI" id="CHEBI:58359"/>
        <dbReference type="EC" id="3.5.1.2"/>
    </reaction>
</comment>
<comment type="pathway">
    <text evidence="1">Purine metabolism; IMP biosynthesis via de novo pathway; 5-amino-1-(5-phospho-D-ribosyl)imidazole from N(2)-formyl-N(1)-(5-phospho-D-ribosyl)glycinamide: step 1/2.</text>
</comment>
<comment type="subunit">
    <text evidence="1">Part of the FGAM synthase complex composed of 1 PurL, 1 PurQ and 2 PurS subunits.</text>
</comment>
<comment type="subcellular location">
    <subcellularLocation>
        <location evidence="1">Cytoplasm</location>
    </subcellularLocation>
</comment>
<name>PURQ_LEPIC</name>
<accession>Q72UH6</accession>
<protein>
    <recommendedName>
        <fullName evidence="1">Phosphoribosylformylglycinamidine synthase subunit PurQ</fullName>
        <shortName evidence="1">FGAM synthase</shortName>
        <ecNumber evidence="1">6.3.5.3</ecNumber>
    </recommendedName>
    <alternativeName>
        <fullName evidence="1">Formylglycinamide ribonucleotide amidotransferase subunit I</fullName>
        <shortName evidence="1">FGAR amidotransferase I</shortName>
        <shortName evidence="1">FGAR-AT I</shortName>
    </alternativeName>
    <alternativeName>
        <fullName evidence="1">Glutaminase PurQ</fullName>
        <ecNumber evidence="1">3.5.1.2</ecNumber>
    </alternativeName>
    <alternativeName>
        <fullName evidence="1">Phosphoribosylformylglycinamidine synthase subunit I</fullName>
    </alternativeName>
</protein>
<dbReference type="EC" id="6.3.5.3" evidence="1"/>
<dbReference type="EC" id="3.5.1.2" evidence="1"/>
<dbReference type="EMBL" id="AE016823">
    <property type="protein sequence ID" value="AAS69302.1"/>
    <property type="molecule type" value="Genomic_DNA"/>
</dbReference>
<dbReference type="RefSeq" id="WP_000686200.1">
    <property type="nucleotide sequence ID" value="NC_005823.1"/>
</dbReference>
<dbReference type="SMR" id="Q72UH6"/>
<dbReference type="GeneID" id="61144024"/>
<dbReference type="KEGG" id="lic:LIC_10681"/>
<dbReference type="HOGENOM" id="CLU_001031_3_1_12"/>
<dbReference type="UniPathway" id="UPA00074">
    <property type="reaction ID" value="UER00128"/>
</dbReference>
<dbReference type="Proteomes" id="UP000007037">
    <property type="component" value="Chromosome I"/>
</dbReference>
<dbReference type="GO" id="GO:0005737">
    <property type="term" value="C:cytoplasm"/>
    <property type="evidence" value="ECO:0007669"/>
    <property type="project" value="UniProtKB-SubCell"/>
</dbReference>
<dbReference type="GO" id="GO:0005524">
    <property type="term" value="F:ATP binding"/>
    <property type="evidence" value="ECO:0007669"/>
    <property type="project" value="UniProtKB-KW"/>
</dbReference>
<dbReference type="GO" id="GO:0004359">
    <property type="term" value="F:glutaminase activity"/>
    <property type="evidence" value="ECO:0007669"/>
    <property type="project" value="UniProtKB-EC"/>
</dbReference>
<dbReference type="GO" id="GO:0004642">
    <property type="term" value="F:phosphoribosylformylglycinamidine synthase activity"/>
    <property type="evidence" value="ECO:0007669"/>
    <property type="project" value="UniProtKB-UniRule"/>
</dbReference>
<dbReference type="GO" id="GO:0006189">
    <property type="term" value="P:'de novo' IMP biosynthetic process"/>
    <property type="evidence" value="ECO:0007669"/>
    <property type="project" value="UniProtKB-UniRule"/>
</dbReference>
<dbReference type="CDD" id="cd01740">
    <property type="entry name" value="GATase1_FGAR_AT"/>
    <property type="match status" value="1"/>
</dbReference>
<dbReference type="Gene3D" id="3.40.50.880">
    <property type="match status" value="1"/>
</dbReference>
<dbReference type="HAMAP" id="MF_00421">
    <property type="entry name" value="PurQ"/>
    <property type="match status" value="1"/>
</dbReference>
<dbReference type="InterPro" id="IPR029062">
    <property type="entry name" value="Class_I_gatase-like"/>
</dbReference>
<dbReference type="InterPro" id="IPR010075">
    <property type="entry name" value="PRibForGlyAmidine_synth_PurQ"/>
</dbReference>
<dbReference type="NCBIfam" id="TIGR01737">
    <property type="entry name" value="FGAM_synth_I"/>
    <property type="match status" value="1"/>
</dbReference>
<dbReference type="NCBIfam" id="NF002957">
    <property type="entry name" value="PRK03619.1"/>
    <property type="match status" value="1"/>
</dbReference>
<dbReference type="PANTHER" id="PTHR47552">
    <property type="entry name" value="PHOSPHORIBOSYLFORMYLGLYCINAMIDINE SYNTHASE SUBUNIT PURQ"/>
    <property type="match status" value="1"/>
</dbReference>
<dbReference type="PANTHER" id="PTHR47552:SF1">
    <property type="entry name" value="PHOSPHORIBOSYLFORMYLGLYCINAMIDINE SYNTHASE SUBUNIT PURQ"/>
    <property type="match status" value="1"/>
</dbReference>
<dbReference type="Pfam" id="PF13507">
    <property type="entry name" value="GATase_5"/>
    <property type="match status" value="1"/>
</dbReference>
<dbReference type="PIRSF" id="PIRSF001586">
    <property type="entry name" value="FGAM_synth_I"/>
    <property type="match status" value="1"/>
</dbReference>
<dbReference type="SMART" id="SM01211">
    <property type="entry name" value="GATase_5"/>
    <property type="match status" value="1"/>
</dbReference>
<dbReference type="SUPFAM" id="SSF52317">
    <property type="entry name" value="Class I glutamine amidotransferase-like"/>
    <property type="match status" value="1"/>
</dbReference>
<dbReference type="PROSITE" id="PS51273">
    <property type="entry name" value="GATASE_TYPE_1"/>
    <property type="match status" value="1"/>
</dbReference>
<sequence length="219" mass="24117">MKIAVITFPGSNCDSDIYRVLKDQYNAEVDRIWHRDGLDKKYELVILPGGFSYGDYLRSGAMAGFSPVMKSVKEHVDKGGKLFGICNGFQILTEAEYLPGALIRNKTLKYICKTVILTKGSAGNPVTASMDVRKELKIPIAHADGCYYATSDVLKQLEDEDRILFRYSGENPNGSLDSIAGITSKNFKIVGMMPHPERAMNPITGEMDGKVVLDLILGS</sequence>